<gene>
    <name evidence="1" type="primary">vapC12</name>
    <name type="ordered locus">Rv1720c</name>
</gene>
<comment type="function">
    <text evidence="1">Toxic component of a type II toxin-antitoxin (TA) system. An RNase. The cognate antitoxin is VapB12 (By similarity).</text>
</comment>
<comment type="cofactor">
    <cofactor evidence="1">
        <name>Mg(2+)</name>
        <dbReference type="ChEBI" id="CHEBI:18420"/>
    </cofactor>
</comment>
<comment type="similarity">
    <text evidence="1">Belongs to the PINc/VapC protein family.</text>
</comment>
<dbReference type="EC" id="3.1.-.-" evidence="1"/>
<dbReference type="EMBL" id="AL123456">
    <property type="protein sequence ID" value="CCP44486.1"/>
    <property type="molecule type" value="Genomic_DNA"/>
</dbReference>
<dbReference type="PIR" id="C70686">
    <property type="entry name" value="C70686"/>
</dbReference>
<dbReference type="RefSeq" id="NP_216236.1">
    <property type="nucleotide sequence ID" value="NC_000962.3"/>
</dbReference>
<dbReference type="RefSeq" id="WP_003408465.1">
    <property type="nucleotide sequence ID" value="NZ_NVQJ01000010.1"/>
</dbReference>
<dbReference type="SMR" id="P9WFA3"/>
<dbReference type="STRING" id="83332.Rv1720c"/>
<dbReference type="PaxDb" id="83332-Rv1720c"/>
<dbReference type="DNASU" id="885180"/>
<dbReference type="GeneID" id="885180"/>
<dbReference type="KEGG" id="mtu:Rv1720c"/>
<dbReference type="KEGG" id="mtv:RVBD_1720c"/>
<dbReference type="TubercuList" id="Rv1720c"/>
<dbReference type="eggNOG" id="COG4113">
    <property type="taxonomic scope" value="Bacteria"/>
</dbReference>
<dbReference type="InParanoid" id="P9WFA3"/>
<dbReference type="OrthoDB" id="4377304at2"/>
<dbReference type="PhylomeDB" id="P9WFA3"/>
<dbReference type="Proteomes" id="UP000001584">
    <property type="component" value="Chromosome"/>
</dbReference>
<dbReference type="GO" id="GO:0000287">
    <property type="term" value="F:magnesium ion binding"/>
    <property type="evidence" value="ECO:0007669"/>
    <property type="project" value="UniProtKB-UniRule"/>
</dbReference>
<dbReference type="GO" id="GO:0004540">
    <property type="term" value="F:RNA nuclease activity"/>
    <property type="evidence" value="ECO:0007669"/>
    <property type="project" value="InterPro"/>
</dbReference>
<dbReference type="CDD" id="cd09873">
    <property type="entry name" value="PIN_Pae0151-like"/>
    <property type="match status" value="1"/>
</dbReference>
<dbReference type="Gene3D" id="3.40.50.1010">
    <property type="entry name" value="5'-nuclease"/>
    <property type="match status" value="1"/>
</dbReference>
<dbReference type="HAMAP" id="MF_00265">
    <property type="entry name" value="VapC_Nob1"/>
    <property type="match status" value="1"/>
</dbReference>
<dbReference type="InterPro" id="IPR029060">
    <property type="entry name" value="PIN-like_dom_sf"/>
</dbReference>
<dbReference type="InterPro" id="IPR002716">
    <property type="entry name" value="PIN_dom"/>
</dbReference>
<dbReference type="InterPro" id="IPR044153">
    <property type="entry name" value="PIN_Pae0151-like"/>
</dbReference>
<dbReference type="InterPro" id="IPR051619">
    <property type="entry name" value="TypeII_TA_RNase_PINc/VapC"/>
</dbReference>
<dbReference type="InterPro" id="IPR022907">
    <property type="entry name" value="VapC_family"/>
</dbReference>
<dbReference type="PANTHER" id="PTHR35901:SF1">
    <property type="entry name" value="EXONUCLEASE VAPC9"/>
    <property type="match status" value="1"/>
</dbReference>
<dbReference type="PANTHER" id="PTHR35901">
    <property type="entry name" value="RIBONUCLEASE VAPC3"/>
    <property type="match status" value="1"/>
</dbReference>
<dbReference type="Pfam" id="PF01850">
    <property type="entry name" value="PIN"/>
    <property type="match status" value="1"/>
</dbReference>
<dbReference type="SUPFAM" id="SSF88723">
    <property type="entry name" value="PIN domain-like"/>
    <property type="match status" value="1"/>
</dbReference>
<name>VPC12_MYCTU</name>
<sequence>MIVLDASAAVELMLTTPAGAAVARRLRGETVHAPAHFDVEVIGAIRQAVVRQLISDHEGLVVVVNFLSLPVRRWPLKPFTQRAYQLRSTHTVADGAYVALAEGLGVPLITCDGRLAQSHGHNAEIELVA</sequence>
<accession>P9WFA3</accession>
<accession>L0T7H4</accession>
<accession>P71978</accession>
<accession>Q7D832</accession>
<reference key="1">
    <citation type="journal article" date="1998" name="Nature">
        <title>Deciphering the biology of Mycobacterium tuberculosis from the complete genome sequence.</title>
        <authorList>
            <person name="Cole S.T."/>
            <person name="Brosch R."/>
            <person name="Parkhill J."/>
            <person name="Garnier T."/>
            <person name="Churcher C.M."/>
            <person name="Harris D.E."/>
            <person name="Gordon S.V."/>
            <person name="Eiglmeier K."/>
            <person name="Gas S."/>
            <person name="Barry C.E. III"/>
            <person name="Tekaia F."/>
            <person name="Badcock K."/>
            <person name="Basham D."/>
            <person name="Brown D."/>
            <person name="Chillingworth T."/>
            <person name="Connor R."/>
            <person name="Davies R.M."/>
            <person name="Devlin K."/>
            <person name="Feltwell T."/>
            <person name="Gentles S."/>
            <person name="Hamlin N."/>
            <person name="Holroyd S."/>
            <person name="Hornsby T."/>
            <person name="Jagels K."/>
            <person name="Krogh A."/>
            <person name="McLean J."/>
            <person name="Moule S."/>
            <person name="Murphy L.D."/>
            <person name="Oliver S."/>
            <person name="Osborne J."/>
            <person name="Quail M.A."/>
            <person name="Rajandream M.A."/>
            <person name="Rogers J."/>
            <person name="Rutter S."/>
            <person name="Seeger K."/>
            <person name="Skelton S."/>
            <person name="Squares S."/>
            <person name="Squares R."/>
            <person name="Sulston J.E."/>
            <person name="Taylor K."/>
            <person name="Whitehead S."/>
            <person name="Barrell B.G."/>
        </authorList>
    </citation>
    <scope>NUCLEOTIDE SEQUENCE [LARGE SCALE GENOMIC DNA]</scope>
    <source>
        <strain>ATCC 25618 / H37Rv</strain>
    </source>
</reference>
<reference key="2">
    <citation type="journal article" date="2005" name="Nucleic Acids Res.">
        <title>Toxin-antitoxin loci are highly abundant in free-living but lost from host-associated prokaryotes.</title>
        <authorList>
            <person name="Pandey D.P."/>
            <person name="Gerdes K."/>
        </authorList>
    </citation>
    <scope>POSSIBLE FUNCTION</scope>
    <source>
        <strain>ATCC 25618 / H37Rv</strain>
    </source>
</reference>
<evidence type="ECO:0000255" key="1">
    <source>
        <dbReference type="HAMAP-Rule" id="MF_00265"/>
    </source>
</evidence>
<organism>
    <name type="scientific">Mycobacterium tuberculosis (strain ATCC 25618 / H37Rv)</name>
    <dbReference type="NCBI Taxonomy" id="83332"/>
    <lineage>
        <taxon>Bacteria</taxon>
        <taxon>Bacillati</taxon>
        <taxon>Actinomycetota</taxon>
        <taxon>Actinomycetes</taxon>
        <taxon>Mycobacteriales</taxon>
        <taxon>Mycobacteriaceae</taxon>
        <taxon>Mycobacterium</taxon>
        <taxon>Mycobacterium tuberculosis complex</taxon>
    </lineage>
</organism>
<feature type="chain" id="PRO_0000407873" description="Ribonuclease VapC12">
    <location>
        <begin position="1"/>
        <end position="129"/>
    </location>
</feature>
<feature type="binding site" evidence="1">
    <location>
        <position position="5"/>
    </location>
    <ligand>
        <name>Mg(2+)</name>
        <dbReference type="ChEBI" id="CHEBI:18420"/>
    </ligand>
</feature>
<feature type="binding site" evidence="1">
    <location>
        <position position="94"/>
    </location>
    <ligand>
        <name>Mg(2+)</name>
        <dbReference type="ChEBI" id="CHEBI:18420"/>
    </ligand>
</feature>
<proteinExistence type="inferred from homology"/>
<protein>
    <recommendedName>
        <fullName evidence="1">Ribonuclease VapC12</fullName>
        <shortName evidence="1">RNase VapC12</shortName>
        <ecNumber evidence="1">3.1.-.-</ecNumber>
    </recommendedName>
    <alternativeName>
        <fullName evidence="1">Toxin VapC12</fullName>
    </alternativeName>
</protein>
<keyword id="KW-0378">Hydrolase</keyword>
<keyword id="KW-0460">Magnesium</keyword>
<keyword id="KW-0479">Metal-binding</keyword>
<keyword id="KW-0540">Nuclease</keyword>
<keyword id="KW-1185">Reference proteome</keyword>
<keyword id="KW-1277">Toxin-antitoxin system</keyword>